<sequence>MSERGLLIVFSGPSGVGKGTVRQEIFSTPDHKFDYSVSMTTRPQRPGEVDGVDYFFRTREEFEALIKEGQMLEYAEYVGNYYGTPLSYVNETLDKGIDVFLEIEVQGALQVKSKVPDGVFIFLTPPDLEELEERLVGRGTDSPEVIAQRIERAKEEIALMREYDYAVVNDQVSLAAERVKRVIEAEHYRVDRVIGRYTNMVKETDKKLS</sequence>
<feature type="chain" id="PRO_0000170613" description="Guanylate kinase">
    <location>
        <begin position="1"/>
        <end position="209"/>
    </location>
</feature>
<feature type="domain" description="Guanylate kinase-like" evidence="1">
    <location>
        <begin position="5"/>
        <end position="184"/>
    </location>
</feature>
<feature type="binding site" evidence="1">
    <location>
        <begin position="12"/>
        <end position="19"/>
    </location>
    <ligand>
        <name>ATP</name>
        <dbReference type="ChEBI" id="CHEBI:30616"/>
    </ligand>
</feature>
<comment type="function">
    <text evidence="1">Essential for recycling GMP and indirectly, cGMP.</text>
</comment>
<comment type="catalytic activity">
    <reaction evidence="1">
        <text>GMP + ATP = GDP + ADP</text>
        <dbReference type="Rhea" id="RHEA:20780"/>
        <dbReference type="ChEBI" id="CHEBI:30616"/>
        <dbReference type="ChEBI" id="CHEBI:58115"/>
        <dbReference type="ChEBI" id="CHEBI:58189"/>
        <dbReference type="ChEBI" id="CHEBI:456216"/>
        <dbReference type="EC" id="2.7.4.8"/>
    </reaction>
</comment>
<comment type="subcellular location">
    <subcellularLocation>
        <location evidence="1">Cytoplasm</location>
    </subcellularLocation>
</comment>
<comment type="similarity">
    <text evidence="1">Belongs to the guanylate kinase family.</text>
</comment>
<reference key="1">
    <citation type="journal article" date="2002" name="Proc. Natl. Acad. Sci. U.S.A.">
        <title>Complete genome sequence and comparative genomic analysis of an emerging human pathogen, serotype V Streptococcus agalactiae.</title>
        <authorList>
            <person name="Tettelin H."/>
            <person name="Masignani V."/>
            <person name="Cieslewicz M.J."/>
            <person name="Eisen J.A."/>
            <person name="Peterson S.N."/>
            <person name="Wessels M.R."/>
            <person name="Paulsen I.T."/>
            <person name="Nelson K.E."/>
            <person name="Margarit I."/>
            <person name="Read T.D."/>
            <person name="Madoff L.C."/>
            <person name="Wolf A.M."/>
            <person name="Beanan M.J."/>
            <person name="Brinkac L.M."/>
            <person name="Daugherty S.C."/>
            <person name="DeBoy R.T."/>
            <person name="Durkin A.S."/>
            <person name="Kolonay J.F."/>
            <person name="Madupu R."/>
            <person name="Lewis M.R."/>
            <person name="Radune D."/>
            <person name="Fedorova N.B."/>
            <person name="Scanlan D."/>
            <person name="Khouri H.M."/>
            <person name="Mulligan S."/>
            <person name="Carty H.A."/>
            <person name="Cline R.T."/>
            <person name="Van Aken S.E."/>
            <person name="Gill J."/>
            <person name="Scarselli M."/>
            <person name="Mora M."/>
            <person name="Iacobini E.T."/>
            <person name="Brettoni C."/>
            <person name="Galli G."/>
            <person name="Mariani M."/>
            <person name="Vegni F."/>
            <person name="Maione D."/>
            <person name="Rinaudo D."/>
            <person name="Rappuoli R."/>
            <person name="Telford J.L."/>
            <person name="Kasper D.L."/>
            <person name="Grandi G."/>
            <person name="Fraser C.M."/>
        </authorList>
    </citation>
    <scope>NUCLEOTIDE SEQUENCE [LARGE SCALE GENOMIC DNA]</scope>
    <source>
        <strain>ATCC BAA-611 / 2603 V/R</strain>
    </source>
</reference>
<proteinExistence type="inferred from homology"/>
<name>KGUA_STRA5</name>
<gene>
    <name evidence="1" type="primary">gmk</name>
    <name type="ordered locus">SAG0313</name>
</gene>
<keyword id="KW-0067">ATP-binding</keyword>
<keyword id="KW-0963">Cytoplasm</keyword>
<keyword id="KW-0418">Kinase</keyword>
<keyword id="KW-0547">Nucleotide-binding</keyword>
<keyword id="KW-1185">Reference proteome</keyword>
<keyword id="KW-0808">Transferase</keyword>
<protein>
    <recommendedName>
        <fullName evidence="1">Guanylate kinase</fullName>
        <ecNumber evidence="1">2.7.4.8</ecNumber>
    </recommendedName>
    <alternativeName>
        <fullName evidence="1">GMP kinase</fullName>
    </alternativeName>
</protein>
<dbReference type="EC" id="2.7.4.8" evidence="1"/>
<dbReference type="EMBL" id="AE009948">
    <property type="protein sequence ID" value="AAM99219.1"/>
    <property type="molecule type" value="Genomic_DNA"/>
</dbReference>
<dbReference type="RefSeq" id="NP_687347.1">
    <property type="nucleotide sequence ID" value="NC_004116.1"/>
</dbReference>
<dbReference type="RefSeq" id="WP_000003861.1">
    <property type="nucleotide sequence ID" value="NC_004116.1"/>
</dbReference>
<dbReference type="SMR" id="P65221"/>
<dbReference type="STRING" id="208435.SAG0313"/>
<dbReference type="GeneID" id="66885285"/>
<dbReference type="KEGG" id="sag:SAG0313"/>
<dbReference type="PATRIC" id="fig|208435.3.peg.309"/>
<dbReference type="HOGENOM" id="CLU_001715_1_0_9"/>
<dbReference type="OrthoDB" id="9808150at2"/>
<dbReference type="Proteomes" id="UP000000821">
    <property type="component" value="Chromosome"/>
</dbReference>
<dbReference type="GO" id="GO:0005829">
    <property type="term" value="C:cytosol"/>
    <property type="evidence" value="ECO:0007669"/>
    <property type="project" value="TreeGrafter"/>
</dbReference>
<dbReference type="GO" id="GO:0005524">
    <property type="term" value="F:ATP binding"/>
    <property type="evidence" value="ECO:0007669"/>
    <property type="project" value="UniProtKB-UniRule"/>
</dbReference>
<dbReference type="GO" id="GO:0004385">
    <property type="term" value="F:guanylate kinase activity"/>
    <property type="evidence" value="ECO:0007669"/>
    <property type="project" value="UniProtKB-UniRule"/>
</dbReference>
<dbReference type="CDD" id="cd00071">
    <property type="entry name" value="GMPK"/>
    <property type="match status" value="1"/>
</dbReference>
<dbReference type="FunFam" id="3.40.50.300:FF:000855">
    <property type="entry name" value="Guanylate kinase"/>
    <property type="match status" value="1"/>
</dbReference>
<dbReference type="FunFam" id="3.30.63.10:FF:000002">
    <property type="entry name" value="Guanylate kinase 1"/>
    <property type="match status" value="1"/>
</dbReference>
<dbReference type="Gene3D" id="3.30.63.10">
    <property type="entry name" value="Guanylate Kinase phosphate binding domain"/>
    <property type="match status" value="1"/>
</dbReference>
<dbReference type="Gene3D" id="3.40.50.300">
    <property type="entry name" value="P-loop containing nucleotide triphosphate hydrolases"/>
    <property type="match status" value="2"/>
</dbReference>
<dbReference type="HAMAP" id="MF_00328">
    <property type="entry name" value="Guanylate_kinase"/>
    <property type="match status" value="1"/>
</dbReference>
<dbReference type="InterPro" id="IPR008145">
    <property type="entry name" value="GK/Ca_channel_bsu"/>
</dbReference>
<dbReference type="InterPro" id="IPR008144">
    <property type="entry name" value="Guanylate_kin-like_dom"/>
</dbReference>
<dbReference type="InterPro" id="IPR017665">
    <property type="entry name" value="Guanylate_kinase"/>
</dbReference>
<dbReference type="InterPro" id="IPR020590">
    <property type="entry name" value="Guanylate_kinase_CS"/>
</dbReference>
<dbReference type="InterPro" id="IPR027417">
    <property type="entry name" value="P-loop_NTPase"/>
</dbReference>
<dbReference type="NCBIfam" id="TIGR03263">
    <property type="entry name" value="guanyl_kin"/>
    <property type="match status" value="1"/>
</dbReference>
<dbReference type="PANTHER" id="PTHR23117:SF13">
    <property type="entry name" value="GUANYLATE KINASE"/>
    <property type="match status" value="1"/>
</dbReference>
<dbReference type="PANTHER" id="PTHR23117">
    <property type="entry name" value="GUANYLATE KINASE-RELATED"/>
    <property type="match status" value="1"/>
</dbReference>
<dbReference type="Pfam" id="PF00625">
    <property type="entry name" value="Guanylate_kin"/>
    <property type="match status" value="1"/>
</dbReference>
<dbReference type="SMART" id="SM00072">
    <property type="entry name" value="GuKc"/>
    <property type="match status" value="1"/>
</dbReference>
<dbReference type="SUPFAM" id="SSF52540">
    <property type="entry name" value="P-loop containing nucleoside triphosphate hydrolases"/>
    <property type="match status" value="1"/>
</dbReference>
<dbReference type="PROSITE" id="PS00856">
    <property type="entry name" value="GUANYLATE_KINASE_1"/>
    <property type="match status" value="1"/>
</dbReference>
<dbReference type="PROSITE" id="PS50052">
    <property type="entry name" value="GUANYLATE_KINASE_2"/>
    <property type="match status" value="1"/>
</dbReference>
<organism>
    <name type="scientific">Streptococcus agalactiae serotype V (strain ATCC BAA-611 / 2603 V/R)</name>
    <dbReference type="NCBI Taxonomy" id="208435"/>
    <lineage>
        <taxon>Bacteria</taxon>
        <taxon>Bacillati</taxon>
        <taxon>Bacillota</taxon>
        <taxon>Bacilli</taxon>
        <taxon>Lactobacillales</taxon>
        <taxon>Streptococcaceae</taxon>
        <taxon>Streptococcus</taxon>
    </lineage>
</organism>
<evidence type="ECO:0000255" key="1">
    <source>
        <dbReference type="HAMAP-Rule" id="MF_00328"/>
    </source>
</evidence>
<accession>P65221</accession>
<accession>Q8E1P1</accession>
<accession>Q8E756</accession>